<name>FUB2_GIBF5</name>
<accession>S0DRX0</accession>
<dbReference type="EMBL" id="HF679025">
    <property type="protein sequence ID" value="CCT65185.1"/>
    <property type="molecule type" value="Genomic_DNA"/>
</dbReference>
<dbReference type="SMR" id="S0DRX0"/>
<dbReference type="STRING" id="1279085.S0DRX0"/>
<dbReference type="EnsemblFungi" id="CCT65185">
    <property type="protein sequence ID" value="CCT65185"/>
    <property type="gene ID" value="FFUJ_02106"/>
</dbReference>
<dbReference type="VEuPathDB" id="FungiDB:FFUJ_02106"/>
<dbReference type="HOGENOM" id="CLU_110355_2_4_1"/>
<dbReference type="Proteomes" id="UP000016800">
    <property type="component" value="Chromosome 3"/>
</dbReference>
<dbReference type="Gene3D" id="3.30.70.1060">
    <property type="entry name" value="Dimeric alpha+beta barrel"/>
    <property type="match status" value="1"/>
</dbReference>
<dbReference type="InterPro" id="IPR011008">
    <property type="entry name" value="Dimeric_a/b-barrel"/>
</dbReference>
<dbReference type="InterPro" id="IPR051807">
    <property type="entry name" value="Sec-metab_biosynth-assoc"/>
</dbReference>
<dbReference type="InterPro" id="IPR005545">
    <property type="entry name" value="YCII"/>
</dbReference>
<dbReference type="PANTHER" id="PTHR33606">
    <property type="entry name" value="PROTEIN YCII"/>
    <property type="match status" value="1"/>
</dbReference>
<dbReference type="PANTHER" id="PTHR33606:SF3">
    <property type="entry name" value="PROTEIN YCII"/>
    <property type="match status" value="1"/>
</dbReference>
<dbReference type="Pfam" id="PF03795">
    <property type="entry name" value="YCII"/>
    <property type="match status" value="1"/>
</dbReference>
<dbReference type="SUPFAM" id="SSF54909">
    <property type="entry name" value="Dimeric alpha+beta barrel"/>
    <property type="match status" value="1"/>
</dbReference>
<feature type="chain" id="PRO_0000437310" description="Fusaric acid biosynthesis protein 2">
    <location>
        <begin position="1"/>
        <end position="104"/>
    </location>
</feature>
<protein>
    <recommendedName>
        <fullName evidence="10">Fusaric acid biosynthesis protein 2</fullName>
    </recommendedName>
</protein>
<proteinExistence type="evidence at protein level"/>
<comment type="function">
    <text evidence="8 9">Part of the gene cluster that mediates the biosynthesis of fusaric acid, a mycotoxin with low to moderate toxicity to animals and humans, but with high phytotoxic properties (PubMed:24389666, PubMed:26662839). L-aspartate is suggested as fusaric acid amino acid precursor that is activated and further processed to O-acetyl-L-homoserine by cluster enzymes aspartate kinase FUB3 and homoserine O-acetyltransferase FUB5, as well as enzymes of the primary metabolism (PubMed:26662839). The polyketide synthase (PKS) FUB1 generates the triketide trans-2-hexenal which is presumptively released by the hydrolase FUB4 and linked to the NRPS-bound amino acid precursor by NAD(P)-dependent dehydrogenase FUB6 (PubMed:26662839). FUB1, FUB4, and the non-canonical NRPS Fub8 may form an enzyme complex (PubMed:26662839). Further processing of the NRPS-bound intermediate might be carried out by FUB6 and the sulfhydrylase FUB7, enabling a spontaneous electrocyclization to close the carbon backbone of fusaric acid (PubMed:26662839). Dihydrofusaric acid is likely to be released via reduction by the thioester reductase (TR) domain of FUB8 whereupon the final oxidation to fusaric acid may (also) be performed by the FMN-dependent dehydrogenase FUB9 (PubMed:26662839).</text>
</comment>
<comment type="pathway">
    <text evidence="9">Mycotoxin biosynthesis.</text>
</comment>
<comment type="induction">
    <text evidence="8">Expressed under high amounts of nitrogen via regulation by AREB (PubMed:24389666). Moreover, components of the fungal-specific velvet complex VEL1 and LAE1 act also as positive regulators of expression (PubMed:24389666). Finally, the pH regulator PACC acts as activator of FUB expression after the pH shift to alkaline ambient conditions (PubMed:24389666).</text>
</comment>
<comment type="disruption phenotype">
    <text evidence="8">Impairs the production of fusaric acid (PubMed:24389666).</text>
</comment>
<comment type="biotechnology">
    <text evidence="1 2 3 4 5 6 7">Fusaric acid is phytotoxic to plants such as cotton and banana (PubMed:20955724, PubMed:23922960). It has been shown to induce programmed cell death in plants (PubMed:16868776, PubMed:23838885). In addition to a mild toxicity to animals, fusaric acid exhibits acanthamoebicidal, antioomycete, and antimycobacterial activities (PubMed:17927749, PubMed:21811925, PubMed:22864988).</text>
</comment>
<comment type="similarity">
    <text evidence="11">Belongs to the YciI family.</text>
</comment>
<evidence type="ECO:0000269" key="1">
    <source>
    </source>
</evidence>
<evidence type="ECO:0000269" key="2">
    <source>
    </source>
</evidence>
<evidence type="ECO:0000269" key="3">
    <source>
    </source>
</evidence>
<evidence type="ECO:0000269" key="4">
    <source>
    </source>
</evidence>
<evidence type="ECO:0000269" key="5">
    <source>
    </source>
</evidence>
<evidence type="ECO:0000269" key="6">
    <source>
    </source>
</evidence>
<evidence type="ECO:0000269" key="7">
    <source>
    </source>
</evidence>
<evidence type="ECO:0000269" key="8">
    <source>
    </source>
</evidence>
<evidence type="ECO:0000269" key="9">
    <source>
    </source>
</evidence>
<evidence type="ECO:0000303" key="10">
    <source>
    </source>
</evidence>
<evidence type="ECO:0000305" key="11"/>
<reference key="1">
    <citation type="journal article" date="2013" name="PLoS Pathog.">
        <title>Deciphering the cryptic genome: genome-wide analyses of the rice pathogen Fusarium fujikuroi reveal complex regulation of secondary metabolism and novel metabolites.</title>
        <authorList>
            <person name="Wiemann P."/>
            <person name="Sieber C.M.K."/>
            <person name="von Bargen K.W."/>
            <person name="Studt L."/>
            <person name="Niehaus E.-M."/>
            <person name="Espino J.J."/>
            <person name="Huss K."/>
            <person name="Michielse C.B."/>
            <person name="Albermann S."/>
            <person name="Wagner D."/>
            <person name="Bergner S.V."/>
            <person name="Connolly L.R."/>
            <person name="Fischer A."/>
            <person name="Reuter G."/>
            <person name="Kleigrewe K."/>
            <person name="Bald T."/>
            <person name="Wingfield B.D."/>
            <person name="Ophir R."/>
            <person name="Freeman S."/>
            <person name="Hippler M."/>
            <person name="Smith K.M."/>
            <person name="Brown D.W."/>
            <person name="Proctor R.H."/>
            <person name="Muensterkoetter M."/>
            <person name="Freitag M."/>
            <person name="Humpf H.-U."/>
            <person name="Gueldener U."/>
            <person name="Tudzynski B."/>
        </authorList>
    </citation>
    <scope>NUCLEOTIDE SEQUENCE [LARGE SCALE GENOMIC DNA]</scope>
    <source>
        <strain>CBS 195.34 / IMI 58289 / NRRL A-6831</strain>
    </source>
</reference>
<reference key="2">
    <citation type="journal article" date="2006" name="Planta">
        <title>Fusaric acid induces apoptosis in saffron root-tip cells: roles of caspase-like activity, cytochrome c, and H2O2.</title>
        <authorList>
            <person name="Samadi L."/>
            <person name="Shahsavan Behboodi B."/>
        </authorList>
    </citation>
    <scope>BIOTECHNOLOGY</scope>
</reference>
<reference key="3">
    <citation type="journal article" date="2008" name="J. Appl. Microbiol.">
        <title>Bikaverin and fusaric acid from Fusarium oxysporum show antioomycete activity against Phytophthora infestans.</title>
        <authorList>
            <person name="Son S.W."/>
            <person name="Kim H.Y."/>
            <person name="Choi G.J."/>
            <person name="Lim H.K."/>
            <person name="Jang K.S."/>
            <person name="Lee S.O."/>
            <person name="Lee S."/>
            <person name="Sung N.D."/>
            <person name="Kim J.C."/>
        </authorList>
    </citation>
    <scope>BIOTECHNOLOGY</scope>
</reference>
<reference key="4">
    <citation type="journal article" date="2011" name="Arch. Pharm. Res.">
        <title>Antimycobacterial activity of fusaric acid from a mangrove endophyte and its metal complexes.</title>
        <authorList>
            <person name="Pan J.H."/>
            <person name="Chen Y."/>
            <person name="Huang Y.H."/>
            <person name="Tao Y.W."/>
            <person name="Wang J."/>
            <person name="Li Y."/>
            <person name="Peng Y."/>
            <person name="Dong T."/>
            <person name="Lai X.M."/>
            <person name="Lin Y.C."/>
        </authorList>
    </citation>
    <scope>BIOTECHNOLOGY</scope>
</reference>
<reference key="5">
    <citation type="journal article" date="2011" name="Toxicon">
        <title>Phytotoxicity of fusaric acid and analogs to cotton.</title>
        <authorList>
            <person name="Stipanovic R.D."/>
            <person name="Puckhaber L.S."/>
            <person name="Liu J."/>
            <person name="Bell A.A."/>
        </authorList>
    </citation>
    <scope>BIOTECHNOLOGY</scope>
</reference>
<reference key="6">
    <citation type="journal article" date="2012" name="Planta Med.">
        <title>In vitro acanthamoebicidal activity of fusaric acid and dehydrofusaric acid from an endophytic fungus Fusarium sp. Tlau3.</title>
        <authorList>
            <person name="Boonman N."/>
            <person name="Prachya S."/>
            <person name="Boonmee A."/>
            <person name="Kittakoop P."/>
            <person name="Wiyakrutta S."/>
            <person name="Sriubolmas N."/>
            <person name="Warit S."/>
            <person name="Dharmkrong-At Chusattayanond A."/>
        </authorList>
    </citation>
    <scope>BIOTECHNOLOGY</scope>
</reference>
<reference key="7">
    <citation type="journal article" date="2013" name="Planta">
        <title>Fusaric acid induction of programmed cell death modulated through nitric oxide signalling in tobacco suspension cells.</title>
        <authorList>
            <person name="Jiao J."/>
            <person name="Zhou B."/>
            <person name="Zhu X."/>
            <person name="Gao Z."/>
            <person name="Liang Y."/>
        </authorList>
    </citation>
    <scope>BIOTECHNOLOGY</scope>
</reference>
<reference key="8">
    <citation type="journal article" date="2013" name="PLoS ONE">
        <title>Contamination of bananas with beauvericin and fusaric acid produced by Fusarium oxysporum f. sp. cubense.</title>
        <authorList>
            <person name="Li C."/>
            <person name="Zuo C."/>
            <person name="Deng G."/>
            <person name="Kuang R."/>
            <person name="Yang Q."/>
            <person name="Hu C."/>
            <person name="Sheng O."/>
            <person name="Zhang S."/>
            <person name="Ma L."/>
            <person name="Wei Y."/>
            <person name="Yang J."/>
            <person name="Liu S."/>
            <person name="Biswas M.K."/>
            <person name="Viljoen A."/>
            <person name="Yi G."/>
        </authorList>
    </citation>
    <scope>BIOTECHNOLOGY</scope>
</reference>
<reference key="9">
    <citation type="journal article" date="2014" name="Appl. Microbiol. Biotechnol.">
        <title>Characterization of the fusaric acid gene cluster in Fusarium fujikuroi.</title>
        <authorList>
            <person name="Niehaus E.M."/>
            <person name="von Bargen K.W."/>
            <person name="Espino J.J."/>
            <person name="Pfannmueller A."/>
            <person name="Humpf H.U."/>
            <person name="Tudzynski B."/>
        </authorList>
    </citation>
    <scope>FUNCTION</scope>
    <scope>DISRUPTION PHENOTYPE</scope>
    <scope>INDUCTION</scope>
    <scope>CATALYTIC ACTIVITY</scope>
</reference>
<reference key="10">
    <citation type="journal article" date="2016" name="Environ. Microbiol.">
        <title>Two separate key enzymes and two pathway-specific transcription factors are involved in fusaric acid biosynthesis in Fusarium fujikuroi.</title>
        <authorList>
            <person name="Studt L."/>
            <person name="Janevska S."/>
            <person name="Niehaus E.M."/>
            <person name="Burkhardt I."/>
            <person name="Arndt B."/>
            <person name="Sieber C.M."/>
            <person name="Humpf H.U."/>
            <person name="Dickschat J.S."/>
            <person name="Tudzynski B."/>
        </authorList>
    </citation>
    <scope>FUNCTION</scope>
</reference>
<gene>
    <name evidence="10" type="primary">FUB2</name>
    <name type="ORF">FFUJ_02106</name>
</gene>
<sequence>MATELKEYLVIIPDLPDVLAKRQVLLKPHNQDAAPLVKAGRVPFFGSTLAHHSAEGQQVAENGTVMIIKAESEEEIKEIIRKDIFTIEGVWDFGKLSIWPFKSK</sequence>
<organism>
    <name type="scientific">Gibberella fujikuroi (strain CBS 195.34 / IMI 58289 / NRRL A-6831)</name>
    <name type="common">Bakanae and foot rot disease fungus</name>
    <name type="synonym">Fusarium fujikuroi</name>
    <dbReference type="NCBI Taxonomy" id="1279085"/>
    <lineage>
        <taxon>Eukaryota</taxon>
        <taxon>Fungi</taxon>
        <taxon>Dikarya</taxon>
        <taxon>Ascomycota</taxon>
        <taxon>Pezizomycotina</taxon>
        <taxon>Sordariomycetes</taxon>
        <taxon>Hypocreomycetidae</taxon>
        <taxon>Hypocreales</taxon>
        <taxon>Nectriaceae</taxon>
        <taxon>Fusarium</taxon>
        <taxon>Fusarium fujikuroi species complex</taxon>
    </lineage>
</organism>
<keyword id="KW-1185">Reference proteome</keyword>